<dbReference type="EC" id="3.5.1.110" evidence="1"/>
<dbReference type="EMBL" id="CP001635">
    <property type="protein sequence ID" value="ACS21443.1"/>
    <property type="molecule type" value="Genomic_DNA"/>
</dbReference>
<dbReference type="SMR" id="C5CN80"/>
<dbReference type="STRING" id="543728.Vapar_4839"/>
<dbReference type="KEGG" id="vap:Vapar_4839"/>
<dbReference type="eggNOG" id="COG1335">
    <property type="taxonomic scope" value="Bacteria"/>
</dbReference>
<dbReference type="HOGENOM" id="CLU_068979_8_0_4"/>
<dbReference type="GO" id="GO:0016811">
    <property type="term" value="F:hydrolase activity, acting on carbon-nitrogen (but not peptide) bonds, in linear amides"/>
    <property type="evidence" value="ECO:0007669"/>
    <property type="project" value="UniProtKB-UniRule"/>
</dbReference>
<dbReference type="GO" id="GO:0019740">
    <property type="term" value="P:nitrogen utilization"/>
    <property type="evidence" value="ECO:0007669"/>
    <property type="project" value="UniProtKB-UniRule"/>
</dbReference>
<dbReference type="GO" id="GO:0006212">
    <property type="term" value="P:uracil catabolic process"/>
    <property type="evidence" value="ECO:0007669"/>
    <property type="project" value="UniProtKB-UniRule"/>
</dbReference>
<dbReference type="CDD" id="cd00431">
    <property type="entry name" value="cysteine_hydrolases"/>
    <property type="match status" value="1"/>
</dbReference>
<dbReference type="Gene3D" id="3.40.50.850">
    <property type="entry name" value="Isochorismatase-like"/>
    <property type="match status" value="1"/>
</dbReference>
<dbReference type="HAMAP" id="MF_00830">
    <property type="entry name" value="RutB"/>
    <property type="match status" value="1"/>
</dbReference>
<dbReference type="InterPro" id="IPR000868">
    <property type="entry name" value="Isochorismatase-like_dom"/>
</dbReference>
<dbReference type="InterPro" id="IPR050272">
    <property type="entry name" value="Isochorismatase-like_hydrls"/>
</dbReference>
<dbReference type="InterPro" id="IPR036380">
    <property type="entry name" value="Isochorismatase-like_sf"/>
</dbReference>
<dbReference type="InterPro" id="IPR019916">
    <property type="entry name" value="RutB"/>
</dbReference>
<dbReference type="NCBIfam" id="TIGR03614">
    <property type="entry name" value="RutB"/>
    <property type="match status" value="1"/>
</dbReference>
<dbReference type="PANTHER" id="PTHR43540:SF6">
    <property type="entry name" value="ISOCHORISMATASE-LIKE DOMAIN-CONTAINING PROTEIN"/>
    <property type="match status" value="1"/>
</dbReference>
<dbReference type="PANTHER" id="PTHR43540">
    <property type="entry name" value="PEROXYUREIDOACRYLATE/UREIDOACRYLATE AMIDOHYDROLASE-RELATED"/>
    <property type="match status" value="1"/>
</dbReference>
<dbReference type="Pfam" id="PF00857">
    <property type="entry name" value="Isochorismatase"/>
    <property type="match status" value="1"/>
</dbReference>
<dbReference type="SUPFAM" id="SSF52499">
    <property type="entry name" value="Isochorismatase-like hydrolases"/>
    <property type="match status" value="1"/>
</dbReference>
<feature type="chain" id="PRO_0000402706" description="Ureidoacrylate amidohydrolase RutB">
    <location>
        <begin position="1"/>
        <end position="252"/>
    </location>
</feature>
<feature type="region of interest" description="Disordered" evidence="2">
    <location>
        <begin position="1"/>
        <end position="31"/>
    </location>
</feature>
<feature type="compositionally biased region" description="Polar residues" evidence="2">
    <location>
        <begin position="1"/>
        <end position="14"/>
    </location>
</feature>
<feature type="compositionally biased region" description="Low complexity" evidence="2">
    <location>
        <begin position="15"/>
        <end position="27"/>
    </location>
</feature>
<feature type="active site" description="Proton acceptor" evidence="1">
    <location>
        <position position="50"/>
    </location>
</feature>
<feature type="active site" evidence="1">
    <location>
        <position position="159"/>
    </location>
</feature>
<feature type="active site" description="Nucleophile" evidence="1">
    <location>
        <position position="192"/>
    </location>
</feature>
<accession>C5CN80</accession>
<protein>
    <recommendedName>
        <fullName evidence="1">Ureidoacrylate amidohydrolase RutB</fullName>
        <ecNumber evidence="1">3.5.1.110</ecNumber>
    </recommendedName>
</protein>
<comment type="function">
    <text evidence="1">Hydrolyzes ureidoacrylate to form aminoacrylate and carbamate. The carbamate hydrolyzes spontaneously, thereby releasing one of the nitrogen atoms of the pyrimidine ring as ammonia and one of its carbon atoms as CO2.</text>
</comment>
<comment type="catalytic activity">
    <reaction evidence="1">
        <text>(Z)-3-ureidoacrylate + H2O + H(+) = (Z)-3-aminoacrylate + NH4(+) + CO2</text>
        <dbReference type="Rhea" id="RHEA:42624"/>
        <dbReference type="ChEBI" id="CHEBI:15377"/>
        <dbReference type="ChEBI" id="CHEBI:15378"/>
        <dbReference type="ChEBI" id="CHEBI:16526"/>
        <dbReference type="ChEBI" id="CHEBI:28938"/>
        <dbReference type="ChEBI" id="CHEBI:59891"/>
        <dbReference type="ChEBI" id="CHEBI:59894"/>
        <dbReference type="EC" id="3.5.1.110"/>
    </reaction>
</comment>
<comment type="catalytic activity">
    <reaction evidence="1">
        <text>(Z)-3-ureidoacrylate + H2O = (Z)-3-aminoacrylate + carbamate + H(+)</text>
        <dbReference type="Rhea" id="RHEA:31603"/>
        <dbReference type="ChEBI" id="CHEBI:13941"/>
        <dbReference type="ChEBI" id="CHEBI:15377"/>
        <dbReference type="ChEBI" id="CHEBI:15378"/>
        <dbReference type="ChEBI" id="CHEBI:59891"/>
        <dbReference type="ChEBI" id="CHEBI:59894"/>
    </reaction>
</comment>
<comment type="catalytic activity">
    <reaction evidence="1">
        <text>(Z)-2-methylureidoacrylate + H2O + H(+) = (Z)-2-methylaminoacrylate + NH4(+) + CO2</text>
        <dbReference type="Rhea" id="RHEA:42620"/>
        <dbReference type="ChEBI" id="CHEBI:15377"/>
        <dbReference type="ChEBI" id="CHEBI:15378"/>
        <dbReference type="ChEBI" id="CHEBI:16526"/>
        <dbReference type="ChEBI" id="CHEBI:28938"/>
        <dbReference type="ChEBI" id="CHEBI:143783"/>
        <dbReference type="ChEBI" id="CHEBI:145735"/>
        <dbReference type="EC" id="3.5.1.110"/>
    </reaction>
</comment>
<comment type="similarity">
    <text evidence="1">Belongs to the isochorismatase family. RutB subfamily.</text>
</comment>
<keyword id="KW-0378">Hydrolase</keyword>
<organism>
    <name type="scientific">Variovorax paradoxus (strain S110)</name>
    <dbReference type="NCBI Taxonomy" id="543728"/>
    <lineage>
        <taxon>Bacteria</taxon>
        <taxon>Pseudomonadati</taxon>
        <taxon>Pseudomonadota</taxon>
        <taxon>Betaproteobacteria</taxon>
        <taxon>Burkholderiales</taxon>
        <taxon>Comamonadaceae</taxon>
        <taxon>Variovorax</taxon>
    </lineage>
</organism>
<gene>
    <name evidence="1" type="primary">rutB</name>
    <name type="ordered locus">Vapar_4839</name>
</gene>
<sequence length="252" mass="26778">MSTPARNTTLTSNTPAGAPRLPGAPAPQVLPARPEPLALHASDSALIVVDMQNAYASMGGYVDSAGFDISGAQGTIANIARTIAAARTAGMLVVFLQNGWDAAYVEAGGPGSPNWHKSNALKTMRARPELAGKFLAKGGWDYELIAEMKPQPGDIVVPKTRYSGFFNSTLDSTLRARGIRHLVFTGIATNVCVESTLRDAFHLEYFAVMLEDATHELGGAAIQKASVYNVETFFGWVSTVDDFVRSFAPATA</sequence>
<evidence type="ECO:0000255" key="1">
    <source>
        <dbReference type="HAMAP-Rule" id="MF_00830"/>
    </source>
</evidence>
<evidence type="ECO:0000256" key="2">
    <source>
        <dbReference type="SAM" id="MobiDB-lite"/>
    </source>
</evidence>
<proteinExistence type="inferred from homology"/>
<name>RUTB_VARPS</name>
<reference key="1">
    <citation type="journal article" date="2011" name="J. Bacteriol.">
        <title>Complete genome sequence of the metabolically versatile plant growth-promoting endophyte, Variovorax paradoxus S110.</title>
        <authorList>
            <person name="Han J.I."/>
            <person name="Choi H.K."/>
            <person name="Lee S.W."/>
            <person name="Orwin P.M."/>
            <person name="Kim J."/>
            <person name="Laroe S.L."/>
            <person name="Kim T.G."/>
            <person name="O'Neil J."/>
            <person name="Leadbetter J.R."/>
            <person name="Lee S.Y."/>
            <person name="Hur C.G."/>
            <person name="Spain J.C."/>
            <person name="Ovchinnikova G."/>
            <person name="Goodwin L."/>
            <person name="Han C."/>
        </authorList>
    </citation>
    <scope>NUCLEOTIDE SEQUENCE [LARGE SCALE GENOMIC DNA]</scope>
    <source>
        <strain>S110</strain>
    </source>
</reference>